<sequence length="79" mass="8830">MDFTKKILVVFAFTIMLGISSVHCRPSFKPIPLFGEKLTQCFDTRPCLQGMLKCIEFCSSMGTADGQCNNENLCCCTHE</sequence>
<evidence type="ECO:0000250" key="1"/>
<evidence type="ECO:0000255" key="2"/>
<evidence type="ECO:0000305" key="3"/>
<feature type="signal peptide" evidence="2">
    <location>
        <begin position="1"/>
        <end position="24"/>
    </location>
</feature>
<feature type="chain" id="PRO_0000379672" description="Defensin-like protein 109">
    <location>
        <begin position="25"/>
        <end position="79"/>
    </location>
</feature>
<feature type="disulfide bond" evidence="1">
    <location>
        <begin position="41"/>
        <end position="76"/>
    </location>
</feature>
<feature type="disulfide bond" evidence="1">
    <location>
        <begin position="47"/>
        <end position="68"/>
    </location>
</feature>
<feature type="disulfide bond" evidence="1">
    <location>
        <begin position="54"/>
        <end position="74"/>
    </location>
</feature>
<feature type="disulfide bond" evidence="1">
    <location>
        <begin position="58"/>
        <end position="75"/>
    </location>
</feature>
<name>DF109_ARATH</name>
<comment type="subcellular location">
    <subcellularLocation>
        <location evidence="1">Secreted</location>
    </subcellularLocation>
</comment>
<comment type="similarity">
    <text evidence="3">Belongs to the DEFL family.</text>
</comment>
<gene>
    <name type="ordered locus">At5g08505</name>
    <name type="ORF">F8L15</name>
    <name type="ORF">MAH20</name>
</gene>
<keyword id="KW-0929">Antimicrobial</keyword>
<keyword id="KW-1015">Disulfide bond</keyword>
<keyword id="KW-0295">Fungicide</keyword>
<keyword id="KW-0611">Plant defense</keyword>
<keyword id="KW-1185">Reference proteome</keyword>
<keyword id="KW-0964">Secreted</keyword>
<keyword id="KW-0732">Signal</keyword>
<accession>Q2V390</accession>
<organism>
    <name type="scientific">Arabidopsis thaliana</name>
    <name type="common">Mouse-ear cress</name>
    <dbReference type="NCBI Taxonomy" id="3702"/>
    <lineage>
        <taxon>Eukaryota</taxon>
        <taxon>Viridiplantae</taxon>
        <taxon>Streptophyta</taxon>
        <taxon>Embryophyta</taxon>
        <taxon>Tracheophyta</taxon>
        <taxon>Spermatophyta</taxon>
        <taxon>Magnoliopsida</taxon>
        <taxon>eudicotyledons</taxon>
        <taxon>Gunneridae</taxon>
        <taxon>Pentapetalae</taxon>
        <taxon>rosids</taxon>
        <taxon>malvids</taxon>
        <taxon>Brassicales</taxon>
        <taxon>Brassicaceae</taxon>
        <taxon>Camelineae</taxon>
        <taxon>Arabidopsis</taxon>
    </lineage>
</organism>
<dbReference type="EMBL" id="AB006697">
    <property type="status" value="NOT_ANNOTATED_CDS"/>
    <property type="molecule type" value="Genomic_DNA"/>
</dbReference>
<dbReference type="EMBL" id="AL392174">
    <property type="status" value="NOT_ANNOTATED_CDS"/>
    <property type="molecule type" value="Genomic_DNA"/>
</dbReference>
<dbReference type="EMBL" id="CP002688">
    <property type="protein sequence ID" value="AED91312.1"/>
    <property type="molecule type" value="Genomic_DNA"/>
</dbReference>
<dbReference type="RefSeq" id="NP_001031858.1">
    <property type="nucleotide sequence ID" value="NM_001036781.1"/>
</dbReference>
<dbReference type="PaxDb" id="3702-AT5G08505.1"/>
<dbReference type="EnsemblPlants" id="AT5G08505.1">
    <property type="protein sequence ID" value="AT5G08505.1"/>
    <property type="gene ID" value="AT5G08505"/>
</dbReference>
<dbReference type="GeneID" id="3770685"/>
<dbReference type="Gramene" id="AT5G08505.1">
    <property type="protein sequence ID" value="AT5G08505.1"/>
    <property type="gene ID" value="AT5G08505"/>
</dbReference>
<dbReference type="KEGG" id="ath:AT5G08505"/>
<dbReference type="Araport" id="AT5G08505"/>
<dbReference type="TAIR" id="AT5G08505"/>
<dbReference type="HOGENOM" id="CLU_183259_0_0_1"/>
<dbReference type="InParanoid" id="Q2V390"/>
<dbReference type="OMA" id="EFCSSMG"/>
<dbReference type="OrthoDB" id="1020812at2759"/>
<dbReference type="PhylomeDB" id="Q2V390"/>
<dbReference type="PRO" id="PR:Q2V390"/>
<dbReference type="Proteomes" id="UP000006548">
    <property type="component" value="Chromosome 5"/>
</dbReference>
<dbReference type="ExpressionAtlas" id="Q2V390">
    <property type="expression patterns" value="baseline and differential"/>
</dbReference>
<dbReference type="GO" id="GO:0005576">
    <property type="term" value="C:extracellular region"/>
    <property type="evidence" value="ECO:0007669"/>
    <property type="project" value="UniProtKB-SubCell"/>
</dbReference>
<dbReference type="GO" id="GO:0050832">
    <property type="term" value="P:defense response to fungus"/>
    <property type="evidence" value="ECO:0007669"/>
    <property type="project" value="UniProtKB-KW"/>
</dbReference>
<dbReference type="GO" id="GO:0031640">
    <property type="term" value="P:killing of cells of another organism"/>
    <property type="evidence" value="ECO:0007669"/>
    <property type="project" value="UniProtKB-KW"/>
</dbReference>
<protein>
    <recommendedName>
        <fullName>Defensin-like protein 109</fullName>
    </recommendedName>
</protein>
<proteinExistence type="evidence at transcript level"/>
<reference key="1">
    <citation type="journal article" date="1997" name="DNA Res.">
        <title>Structural analysis of Arabidopsis thaliana chromosome 5. II. Sequence features of the regions of 1,044,062 bp covered by thirteen physically assigned P1 clones.</title>
        <authorList>
            <person name="Kotani H."/>
            <person name="Nakamura Y."/>
            <person name="Sato S."/>
            <person name="Kaneko T."/>
            <person name="Asamizu E."/>
            <person name="Miyajima N."/>
            <person name="Tabata S."/>
        </authorList>
    </citation>
    <scope>NUCLEOTIDE SEQUENCE [LARGE SCALE GENOMIC DNA]</scope>
    <source>
        <strain>cv. Columbia</strain>
    </source>
</reference>
<reference key="2">
    <citation type="journal article" date="2000" name="Nature">
        <title>Sequence and analysis of chromosome 5 of the plant Arabidopsis thaliana.</title>
        <authorList>
            <person name="Tabata S."/>
            <person name="Kaneko T."/>
            <person name="Nakamura Y."/>
            <person name="Kotani H."/>
            <person name="Kato T."/>
            <person name="Asamizu E."/>
            <person name="Miyajima N."/>
            <person name="Sasamoto S."/>
            <person name="Kimura T."/>
            <person name="Hosouchi T."/>
            <person name="Kawashima K."/>
            <person name="Kohara M."/>
            <person name="Matsumoto M."/>
            <person name="Matsuno A."/>
            <person name="Muraki A."/>
            <person name="Nakayama S."/>
            <person name="Nakazaki N."/>
            <person name="Naruo K."/>
            <person name="Okumura S."/>
            <person name="Shinpo S."/>
            <person name="Takeuchi C."/>
            <person name="Wada T."/>
            <person name="Watanabe A."/>
            <person name="Yamada M."/>
            <person name="Yasuda M."/>
            <person name="Sato S."/>
            <person name="de la Bastide M."/>
            <person name="Huang E."/>
            <person name="Spiegel L."/>
            <person name="Gnoj L."/>
            <person name="O'Shaughnessy A."/>
            <person name="Preston R."/>
            <person name="Habermann K."/>
            <person name="Murray J."/>
            <person name="Johnson D."/>
            <person name="Rohlfing T."/>
            <person name="Nelson J."/>
            <person name="Stoneking T."/>
            <person name="Pepin K."/>
            <person name="Spieth J."/>
            <person name="Sekhon M."/>
            <person name="Armstrong J."/>
            <person name="Becker M."/>
            <person name="Belter E."/>
            <person name="Cordum H."/>
            <person name="Cordes M."/>
            <person name="Courtney L."/>
            <person name="Courtney W."/>
            <person name="Dante M."/>
            <person name="Du H."/>
            <person name="Edwards J."/>
            <person name="Fryman J."/>
            <person name="Haakensen B."/>
            <person name="Lamar E."/>
            <person name="Latreille P."/>
            <person name="Leonard S."/>
            <person name="Meyer R."/>
            <person name="Mulvaney E."/>
            <person name="Ozersky P."/>
            <person name="Riley A."/>
            <person name="Strowmatt C."/>
            <person name="Wagner-McPherson C."/>
            <person name="Wollam A."/>
            <person name="Yoakum M."/>
            <person name="Bell M."/>
            <person name="Dedhia N."/>
            <person name="Parnell L."/>
            <person name="Shah R."/>
            <person name="Rodriguez M."/>
            <person name="Hoon See L."/>
            <person name="Vil D."/>
            <person name="Baker J."/>
            <person name="Kirchoff K."/>
            <person name="Toth K."/>
            <person name="King L."/>
            <person name="Bahret A."/>
            <person name="Miller B."/>
            <person name="Marra M.A."/>
            <person name="Martienssen R."/>
            <person name="McCombie W.R."/>
            <person name="Wilson R.K."/>
            <person name="Murphy G."/>
            <person name="Bancroft I."/>
            <person name="Volckaert G."/>
            <person name="Wambutt R."/>
            <person name="Duesterhoeft A."/>
            <person name="Stiekema W."/>
            <person name="Pohl T."/>
            <person name="Entian K.-D."/>
            <person name="Terryn N."/>
            <person name="Hartley N."/>
            <person name="Bent E."/>
            <person name="Johnson S."/>
            <person name="Langham S.-A."/>
            <person name="McCullagh B."/>
            <person name="Robben J."/>
            <person name="Grymonprez B."/>
            <person name="Zimmermann W."/>
            <person name="Ramsperger U."/>
            <person name="Wedler H."/>
            <person name="Balke K."/>
            <person name="Wedler E."/>
            <person name="Peters S."/>
            <person name="van Staveren M."/>
            <person name="Dirkse W."/>
            <person name="Mooijman P."/>
            <person name="Klein Lankhorst R."/>
            <person name="Weitzenegger T."/>
            <person name="Bothe G."/>
            <person name="Rose M."/>
            <person name="Hauf J."/>
            <person name="Berneiser S."/>
            <person name="Hempel S."/>
            <person name="Feldpausch M."/>
            <person name="Lamberth S."/>
            <person name="Villarroel R."/>
            <person name="Gielen J."/>
            <person name="Ardiles W."/>
            <person name="Bents O."/>
            <person name="Lemcke K."/>
            <person name="Kolesov G."/>
            <person name="Mayer K.F.X."/>
            <person name="Rudd S."/>
            <person name="Schoof H."/>
            <person name="Schueller C."/>
            <person name="Zaccaria P."/>
            <person name="Mewes H.-W."/>
            <person name="Bevan M."/>
            <person name="Fransz P.F."/>
        </authorList>
    </citation>
    <scope>NUCLEOTIDE SEQUENCE [LARGE SCALE GENOMIC DNA]</scope>
    <source>
        <strain>cv. Columbia</strain>
    </source>
</reference>
<reference key="3">
    <citation type="journal article" date="2017" name="Plant J.">
        <title>Araport11: a complete reannotation of the Arabidopsis thaliana reference genome.</title>
        <authorList>
            <person name="Cheng C.Y."/>
            <person name="Krishnakumar V."/>
            <person name="Chan A.P."/>
            <person name="Thibaud-Nissen F."/>
            <person name="Schobel S."/>
            <person name="Town C.D."/>
        </authorList>
    </citation>
    <scope>GENOME REANNOTATION</scope>
    <source>
        <strain>cv. Columbia</strain>
    </source>
</reference>
<reference key="4">
    <citation type="journal article" date="2005" name="Plant Physiol.">
        <title>Genome organization of more than 300 defensin-like genes in Arabidopsis.</title>
        <authorList>
            <person name="Silverstein K.A.T."/>
            <person name="Graham M.A."/>
            <person name="Paape T.D."/>
            <person name="VandenBosch K.A."/>
        </authorList>
    </citation>
    <scope>GENE FAMILY</scope>
</reference>